<dbReference type="EMBL" id="CP001072">
    <property type="protein sequence ID" value="ACD47946.1"/>
    <property type="molecule type" value="Genomic_DNA"/>
</dbReference>
<dbReference type="RefSeq" id="WP_001031330.1">
    <property type="nucleotide sequence ID" value="NC_010698.2"/>
</dbReference>
<dbReference type="SMR" id="B2USW4"/>
<dbReference type="KEGG" id="hps:HPSH_02480"/>
<dbReference type="HOGENOM" id="CLU_101379_2_0_7"/>
<dbReference type="GO" id="GO:0003677">
    <property type="term" value="F:DNA binding"/>
    <property type="evidence" value="ECO:0007669"/>
    <property type="project" value="UniProtKB-UniRule"/>
</dbReference>
<dbReference type="GO" id="GO:0070063">
    <property type="term" value="F:RNA polymerase binding"/>
    <property type="evidence" value="ECO:0007669"/>
    <property type="project" value="InterPro"/>
</dbReference>
<dbReference type="GO" id="GO:0006354">
    <property type="term" value="P:DNA-templated transcription elongation"/>
    <property type="evidence" value="ECO:0007669"/>
    <property type="project" value="TreeGrafter"/>
</dbReference>
<dbReference type="GO" id="GO:0032784">
    <property type="term" value="P:regulation of DNA-templated transcription elongation"/>
    <property type="evidence" value="ECO:0007669"/>
    <property type="project" value="UniProtKB-UniRule"/>
</dbReference>
<dbReference type="FunFam" id="1.10.287.180:FF:000001">
    <property type="entry name" value="Transcription elongation factor GreA"/>
    <property type="match status" value="1"/>
</dbReference>
<dbReference type="FunFam" id="3.10.50.30:FF:000001">
    <property type="entry name" value="Transcription elongation factor GreA"/>
    <property type="match status" value="1"/>
</dbReference>
<dbReference type="Gene3D" id="3.10.50.30">
    <property type="entry name" value="Transcription elongation factor, GreA/GreB, C-terminal domain"/>
    <property type="match status" value="1"/>
</dbReference>
<dbReference type="Gene3D" id="1.10.287.180">
    <property type="entry name" value="Transcription elongation factor, GreA/GreB, N-terminal domain"/>
    <property type="match status" value="1"/>
</dbReference>
<dbReference type="HAMAP" id="MF_00105">
    <property type="entry name" value="GreA_GreB"/>
    <property type="match status" value="1"/>
</dbReference>
<dbReference type="InterPro" id="IPR036953">
    <property type="entry name" value="GreA/GreB_C_sf"/>
</dbReference>
<dbReference type="InterPro" id="IPR018151">
    <property type="entry name" value="TF_GreA/GreB_CS"/>
</dbReference>
<dbReference type="InterPro" id="IPR006359">
    <property type="entry name" value="Tscrpt_elong_fac_GreA"/>
</dbReference>
<dbReference type="InterPro" id="IPR028624">
    <property type="entry name" value="Tscrpt_elong_fac_GreA/B"/>
</dbReference>
<dbReference type="InterPro" id="IPR001437">
    <property type="entry name" value="Tscrpt_elong_fac_GreA/B_C"/>
</dbReference>
<dbReference type="InterPro" id="IPR023459">
    <property type="entry name" value="Tscrpt_elong_fac_GreA/B_fam"/>
</dbReference>
<dbReference type="InterPro" id="IPR022691">
    <property type="entry name" value="Tscrpt_elong_fac_GreA/B_N"/>
</dbReference>
<dbReference type="InterPro" id="IPR036805">
    <property type="entry name" value="Tscrpt_elong_fac_GreA/B_N_sf"/>
</dbReference>
<dbReference type="NCBIfam" id="TIGR01462">
    <property type="entry name" value="greA"/>
    <property type="match status" value="1"/>
</dbReference>
<dbReference type="NCBIfam" id="NF001261">
    <property type="entry name" value="PRK00226.1-2"/>
    <property type="match status" value="1"/>
</dbReference>
<dbReference type="NCBIfam" id="NF001263">
    <property type="entry name" value="PRK00226.1-4"/>
    <property type="match status" value="1"/>
</dbReference>
<dbReference type="NCBIfam" id="NF001264">
    <property type="entry name" value="PRK00226.1-5"/>
    <property type="match status" value="1"/>
</dbReference>
<dbReference type="PANTHER" id="PTHR30437">
    <property type="entry name" value="TRANSCRIPTION ELONGATION FACTOR GREA"/>
    <property type="match status" value="1"/>
</dbReference>
<dbReference type="PANTHER" id="PTHR30437:SF4">
    <property type="entry name" value="TRANSCRIPTION ELONGATION FACTOR GREA"/>
    <property type="match status" value="1"/>
</dbReference>
<dbReference type="Pfam" id="PF01272">
    <property type="entry name" value="GreA_GreB"/>
    <property type="match status" value="1"/>
</dbReference>
<dbReference type="Pfam" id="PF03449">
    <property type="entry name" value="GreA_GreB_N"/>
    <property type="match status" value="1"/>
</dbReference>
<dbReference type="PIRSF" id="PIRSF006092">
    <property type="entry name" value="GreA_GreB"/>
    <property type="match status" value="1"/>
</dbReference>
<dbReference type="SUPFAM" id="SSF54534">
    <property type="entry name" value="FKBP-like"/>
    <property type="match status" value="1"/>
</dbReference>
<dbReference type="SUPFAM" id="SSF46557">
    <property type="entry name" value="GreA transcript cleavage protein, N-terminal domain"/>
    <property type="match status" value="1"/>
</dbReference>
<dbReference type="PROSITE" id="PS00829">
    <property type="entry name" value="GREAB_1"/>
    <property type="match status" value="1"/>
</dbReference>
<dbReference type="PROSITE" id="PS00830">
    <property type="entry name" value="GREAB_2"/>
    <property type="match status" value="1"/>
</dbReference>
<name>GREA_HELPS</name>
<organism>
    <name type="scientific">Helicobacter pylori (strain Shi470)</name>
    <dbReference type="NCBI Taxonomy" id="512562"/>
    <lineage>
        <taxon>Bacteria</taxon>
        <taxon>Pseudomonadati</taxon>
        <taxon>Campylobacterota</taxon>
        <taxon>Epsilonproteobacteria</taxon>
        <taxon>Campylobacterales</taxon>
        <taxon>Helicobacteraceae</taxon>
        <taxon>Helicobacter</taxon>
    </lineage>
</organism>
<reference key="1">
    <citation type="submission" date="2008-05" db="EMBL/GenBank/DDBJ databases">
        <title>Genome sequence of Helicobacter pylori from the remote Amazon: traces of Asian ancestry of the first Americans.</title>
        <authorList>
            <person name="Kersulyte D."/>
            <person name="Kalia A."/>
            <person name="Gilman R.H."/>
            <person name="Berg D.E."/>
        </authorList>
    </citation>
    <scope>NUCLEOTIDE SEQUENCE [LARGE SCALE GENOMIC DNA]</scope>
    <source>
        <strain>Shi470</strain>
    </source>
</reference>
<gene>
    <name evidence="1" type="primary">greA</name>
    <name type="ordered locus">HPSH_02480</name>
</gene>
<keyword id="KW-0238">DNA-binding</keyword>
<keyword id="KW-0804">Transcription</keyword>
<keyword id="KW-0805">Transcription regulation</keyword>
<comment type="function">
    <text evidence="1">Necessary for efficient RNA polymerase transcription elongation past template-encoded arresting sites. The arresting sites in DNA have the property of trapping a certain fraction of elongating RNA polymerases that pass through, resulting in locked ternary complexes. Cleavage of the nascent transcript by cleavage factors such as GreA or GreB allows the resumption of elongation from the new 3'terminus. GreA releases sequences of 2 to 3 nucleotides.</text>
</comment>
<comment type="similarity">
    <text evidence="1">Belongs to the GreA/GreB family.</text>
</comment>
<feature type="chain" id="PRO_1000094173" description="Transcription elongation factor GreA">
    <location>
        <begin position="1"/>
        <end position="164"/>
    </location>
</feature>
<sequence length="164" mass="18257">MNKEPMSMHGYNKICAELKQLKEVERPNIVKEIDIARGHGDLKENAEYHAAKEKQRFIEARIVDLSEIIANAQVIDPSVLAHNKVSFGSTIKILNLDNDKEFSYTIVGSVESDPSKGLISFGSPIAKSLIGKSKGDAVSIQLPNGESDFEILDIYYKEICFDEN</sequence>
<evidence type="ECO:0000255" key="1">
    <source>
        <dbReference type="HAMAP-Rule" id="MF_00105"/>
    </source>
</evidence>
<protein>
    <recommendedName>
        <fullName evidence="1">Transcription elongation factor GreA</fullName>
    </recommendedName>
    <alternativeName>
        <fullName evidence="1">Transcript cleavage factor GreA</fullName>
    </alternativeName>
</protein>
<proteinExistence type="inferred from homology"/>
<accession>B2USW4</accession>